<gene>
    <name evidence="1" type="primary">hemL</name>
    <name type="ordered locus">P9515_05471</name>
</gene>
<evidence type="ECO:0000255" key="1">
    <source>
        <dbReference type="HAMAP-Rule" id="MF_00375"/>
    </source>
</evidence>
<evidence type="ECO:0000305" key="2"/>
<dbReference type="EC" id="5.4.3.8" evidence="1"/>
<dbReference type="EMBL" id="CP000552">
    <property type="protein sequence ID" value="ABM71756.1"/>
    <property type="status" value="ALT_INIT"/>
    <property type="molecule type" value="Genomic_DNA"/>
</dbReference>
<dbReference type="RefSeq" id="WP_041710560.1">
    <property type="nucleotide sequence ID" value="NC_008817.1"/>
</dbReference>
<dbReference type="SMR" id="A2BVE5"/>
<dbReference type="STRING" id="167542.P9515_05471"/>
<dbReference type="GeneID" id="60201673"/>
<dbReference type="KEGG" id="pmc:P9515_05471"/>
<dbReference type="eggNOG" id="COG0001">
    <property type="taxonomic scope" value="Bacteria"/>
</dbReference>
<dbReference type="HOGENOM" id="CLU_016922_1_5_3"/>
<dbReference type="OrthoDB" id="9807885at2"/>
<dbReference type="UniPathway" id="UPA00251">
    <property type="reaction ID" value="UER00317"/>
</dbReference>
<dbReference type="UniPathway" id="UPA00668"/>
<dbReference type="Proteomes" id="UP000001589">
    <property type="component" value="Chromosome"/>
</dbReference>
<dbReference type="GO" id="GO:0005737">
    <property type="term" value="C:cytoplasm"/>
    <property type="evidence" value="ECO:0007669"/>
    <property type="project" value="UniProtKB-SubCell"/>
</dbReference>
<dbReference type="GO" id="GO:0042286">
    <property type="term" value="F:glutamate-1-semialdehyde 2,1-aminomutase activity"/>
    <property type="evidence" value="ECO:0007669"/>
    <property type="project" value="UniProtKB-UniRule"/>
</dbReference>
<dbReference type="GO" id="GO:0030170">
    <property type="term" value="F:pyridoxal phosphate binding"/>
    <property type="evidence" value="ECO:0007669"/>
    <property type="project" value="InterPro"/>
</dbReference>
<dbReference type="GO" id="GO:0008483">
    <property type="term" value="F:transaminase activity"/>
    <property type="evidence" value="ECO:0007669"/>
    <property type="project" value="InterPro"/>
</dbReference>
<dbReference type="GO" id="GO:0015995">
    <property type="term" value="P:chlorophyll biosynthetic process"/>
    <property type="evidence" value="ECO:0007669"/>
    <property type="project" value="UniProtKB-UniRule"/>
</dbReference>
<dbReference type="GO" id="GO:0006782">
    <property type="term" value="P:protoporphyrinogen IX biosynthetic process"/>
    <property type="evidence" value="ECO:0007669"/>
    <property type="project" value="UniProtKB-UniRule"/>
</dbReference>
<dbReference type="CDD" id="cd00610">
    <property type="entry name" value="OAT_like"/>
    <property type="match status" value="1"/>
</dbReference>
<dbReference type="FunFam" id="3.40.640.10:FF:000021">
    <property type="entry name" value="Glutamate-1-semialdehyde 2,1-aminomutase"/>
    <property type="match status" value="1"/>
</dbReference>
<dbReference type="Gene3D" id="3.90.1150.10">
    <property type="entry name" value="Aspartate Aminotransferase, domain 1"/>
    <property type="match status" value="1"/>
</dbReference>
<dbReference type="Gene3D" id="3.40.640.10">
    <property type="entry name" value="Type I PLP-dependent aspartate aminotransferase-like (Major domain)"/>
    <property type="match status" value="1"/>
</dbReference>
<dbReference type="HAMAP" id="MF_00375">
    <property type="entry name" value="HemL_aminotrans_3"/>
    <property type="match status" value="1"/>
</dbReference>
<dbReference type="InterPro" id="IPR004639">
    <property type="entry name" value="4pyrrol_synth_GluAld_NH2Trfase"/>
</dbReference>
<dbReference type="InterPro" id="IPR005814">
    <property type="entry name" value="Aminotrans_3"/>
</dbReference>
<dbReference type="InterPro" id="IPR049704">
    <property type="entry name" value="Aminotrans_3_PPA_site"/>
</dbReference>
<dbReference type="InterPro" id="IPR015424">
    <property type="entry name" value="PyrdxlP-dep_Trfase"/>
</dbReference>
<dbReference type="InterPro" id="IPR015421">
    <property type="entry name" value="PyrdxlP-dep_Trfase_major"/>
</dbReference>
<dbReference type="InterPro" id="IPR015422">
    <property type="entry name" value="PyrdxlP-dep_Trfase_small"/>
</dbReference>
<dbReference type="NCBIfam" id="TIGR00713">
    <property type="entry name" value="hemL"/>
    <property type="match status" value="1"/>
</dbReference>
<dbReference type="NCBIfam" id="NF000818">
    <property type="entry name" value="PRK00062.1"/>
    <property type="match status" value="1"/>
</dbReference>
<dbReference type="PANTHER" id="PTHR43713">
    <property type="entry name" value="GLUTAMATE-1-SEMIALDEHYDE 2,1-AMINOMUTASE"/>
    <property type="match status" value="1"/>
</dbReference>
<dbReference type="PANTHER" id="PTHR43713:SF3">
    <property type="entry name" value="GLUTAMATE-1-SEMIALDEHYDE 2,1-AMINOMUTASE 1, CHLOROPLASTIC-RELATED"/>
    <property type="match status" value="1"/>
</dbReference>
<dbReference type="Pfam" id="PF00202">
    <property type="entry name" value="Aminotran_3"/>
    <property type="match status" value="1"/>
</dbReference>
<dbReference type="SUPFAM" id="SSF53383">
    <property type="entry name" value="PLP-dependent transferases"/>
    <property type="match status" value="1"/>
</dbReference>
<dbReference type="PROSITE" id="PS00600">
    <property type="entry name" value="AA_TRANSFER_CLASS_3"/>
    <property type="match status" value="1"/>
</dbReference>
<feature type="chain" id="PRO_0000382359" description="Glutamate-1-semialdehyde 2,1-aminomutase">
    <location>
        <begin position="1"/>
        <end position="433"/>
    </location>
</feature>
<feature type="modified residue" description="N6-(pyridoxal phosphate)lysine" evidence="1">
    <location>
        <position position="271"/>
    </location>
</feature>
<reference key="1">
    <citation type="journal article" date="2007" name="PLoS Genet.">
        <title>Patterns and implications of gene gain and loss in the evolution of Prochlorococcus.</title>
        <authorList>
            <person name="Kettler G.C."/>
            <person name="Martiny A.C."/>
            <person name="Huang K."/>
            <person name="Zucker J."/>
            <person name="Coleman M.L."/>
            <person name="Rodrigue S."/>
            <person name="Chen F."/>
            <person name="Lapidus A."/>
            <person name="Ferriera S."/>
            <person name="Johnson J."/>
            <person name="Steglich C."/>
            <person name="Church G.M."/>
            <person name="Richardson P."/>
            <person name="Chisholm S.W."/>
        </authorList>
    </citation>
    <scope>NUCLEOTIDE SEQUENCE [LARGE SCALE GENOMIC DNA]</scope>
    <source>
        <strain>MIT 9515</strain>
    </source>
</reference>
<accession>A2BVE5</accession>
<keyword id="KW-0149">Chlorophyll biosynthesis</keyword>
<keyword id="KW-0963">Cytoplasm</keyword>
<keyword id="KW-0413">Isomerase</keyword>
<keyword id="KW-0627">Porphyrin biosynthesis</keyword>
<keyword id="KW-0663">Pyridoxal phosphate</keyword>
<proteinExistence type="inferred from homology"/>
<protein>
    <recommendedName>
        <fullName evidence="1">Glutamate-1-semialdehyde 2,1-aminomutase</fullName>
        <shortName evidence="1">GSA</shortName>
        <ecNumber evidence="1">5.4.3.8</ecNumber>
    </recommendedName>
    <alternativeName>
        <fullName evidence="1">Glutamate-1-semialdehyde aminotransferase</fullName>
        <shortName evidence="1">GSA-AT</shortName>
    </alternativeName>
</protein>
<name>GSA_PROM5</name>
<organism>
    <name type="scientific">Prochlorococcus marinus (strain MIT 9515)</name>
    <dbReference type="NCBI Taxonomy" id="167542"/>
    <lineage>
        <taxon>Bacteria</taxon>
        <taxon>Bacillati</taxon>
        <taxon>Cyanobacteriota</taxon>
        <taxon>Cyanophyceae</taxon>
        <taxon>Synechococcales</taxon>
        <taxon>Prochlorococcaceae</taxon>
        <taxon>Prochlorococcus</taxon>
    </lineage>
</organism>
<sequence>MTDIFNITHSEEVFSSALKLMPGGVSSPVRAFKSVGGQPIVFDRVKGPFAWDVDGNRYIDYIGSWGPAICGHAHPEVITALQEAIEKGTSFGAPCVQENKLAEMVIDAVPSVEMVRFVNSGTEACMAVLRLMRAFTGRDKVIKFDGCYHGHADMFLVKAGSGVATLGLPDSPGVPRTTTANTLTAPYNDLEAVKKLFSENPDAISGVILEPIVGNAGFITPEPGFLEGLRELTTENGSLLVFDEVMTGFRISYGGAQEKFGVTPDLTTLGKVIGGGLPVGAYGGRKEIMSMVAPSGPVYQAGTLSGNPLAMTAGIKTLELLKQEGTYEKMGLATSRLIEGIMQSAENNGIAINGGSVSAMFGFFLCEGPVRNFEEAKTNNSELFGKLHREMIKRGVYLAPSPFEAGFTSLAHSEEEIDRTIEAFDQSFSVIKN</sequence>
<comment type="catalytic activity">
    <reaction evidence="1">
        <text>(S)-4-amino-5-oxopentanoate = 5-aminolevulinate</text>
        <dbReference type="Rhea" id="RHEA:14265"/>
        <dbReference type="ChEBI" id="CHEBI:57501"/>
        <dbReference type="ChEBI" id="CHEBI:356416"/>
        <dbReference type="EC" id="5.4.3.8"/>
    </reaction>
</comment>
<comment type="cofactor">
    <cofactor evidence="1">
        <name>pyridoxal 5'-phosphate</name>
        <dbReference type="ChEBI" id="CHEBI:597326"/>
    </cofactor>
</comment>
<comment type="pathway">
    <text evidence="1">Porphyrin-containing compound metabolism; protoporphyrin-IX biosynthesis; 5-aminolevulinate from L-glutamyl-tRNA(Glu): step 2/2.</text>
</comment>
<comment type="pathway">
    <text evidence="1">Porphyrin-containing compound metabolism; chlorophyll biosynthesis.</text>
</comment>
<comment type="subunit">
    <text evidence="1">Homodimer.</text>
</comment>
<comment type="subcellular location">
    <subcellularLocation>
        <location evidence="1">Cytoplasm</location>
    </subcellularLocation>
</comment>
<comment type="similarity">
    <text evidence="1">Belongs to the class-III pyridoxal-phosphate-dependent aminotransferase family. HemL subfamily.</text>
</comment>
<comment type="sequence caution" evidence="2">
    <conflict type="erroneous initiation">
        <sequence resource="EMBL-CDS" id="ABM71756"/>
    </conflict>
</comment>